<reference key="1">
    <citation type="submission" date="2006-09" db="EMBL/GenBank/DDBJ databases">
        <authorList>
            <consortium name="The Klebsiella pneumonia Genome Sequencing Project"/>
            <person name="McClelland M."/>
            <person name="Sanderson E.K."/>
            <person name="Spieth J."/>
            <person name="Clifton W.S."/>
            <person name="Latreille P."/>
            <person name="Sabo A."/>
            <person name="Pepin K."/>
            <person name="Bhonagiri V."/>
            <person name="Porwollik S."/>
            <person name="Ali J."/>
            <person name="Wilson R.K."/>
        </authorList>
    </citation>
    <scope>NUCLEOTIDE SEQUENCE [LARGE SCALE GENOMIC DNA]</scope>
    <source>
        <strain>ATCC 700721 / MGH 78578</strain>
    </source>
</reference>
<name>ZNTB_KLEP7</name>
<gene>
    <name evidence="1" type="primary">zntB</name>
    <name type="ordered locus">KPN78578_13440</name>
    <name type="ORF">KPN_01373</name>
</gene>
<keyword id="KW-0997">Cell inner membrane</keyword>
<keyword id="KW-1003">Cell membrane</keyword>
<keyword id="KW-0406">Ion transport</keyword>
<keyword id="KW-0472">Membrane</keyword>
<keyword id="KW-0812">Transmembrane</keyword>
<keyword id="KW-1133">Transmembrane helix</keyword>
<keyword id="KW-0813">Transport</keyword>
<keyword id="KW-0862">Zinc</keyword>
<dbReference type="EMBL" id="CP000647">
    <property type="protein sequence ID" value="ABR76805.1"/>
    <property type="molecule type" value="Genomic_DNA"/>
</dbReference>
<dbReference type="RefSeq" id="WP_004148192.1">
    <property type="nucleotide sequence ID" value="NC_009648.1"/>
</dbReference>
<dbReference type="SMR" id="A6T884"/>
<dbReference type="STRING" id="272620.KPN_01373"/>
<dbReference type="PaxDb" id="272620-KPN_01373"/>
<dbReference type="EnsemblBacteria" id="ABR76805">
    <property type="protein sequence ID" value="ABR76805"/>
    <property type="gene ID" value="KPN_01373"/>
</dbReference>
<dbReference type="KEGG" id="kpn:KPN_01373"/>
<dbReference type="HOGENOM" id="CLU_007127_2_0_6"/>
<dbReference type="Proteomes" id="UP000000265">
    <property type="component" value="Chromosome"/>
</dbReference>
<dbReference type="GO" id="GO:0005886">
    <property type="term" value="C:plasma membrane"/>
    <property type="evidence" value="ECO:0007669"/>
    <property type="project" value="UniProtKB-SubCell"/>
</dbReference>
<dbReference type="GO" id="GO:0050897">
    <property type="term" value="F:cobalt ion binding"/>
    <property type="evidence" value="ECO:0007669"/>
    <property type="project" value="TreeGrafter"/>
</dbReference>
<dbReference type="GO" id="GO:0015087">
    <property type="term" value="F:cobalt ion transmembrane transporter activity"/>
    <property type="evidence" value="ECO:0007669"/>
    <property type="project" value="TreeGrafter"/>
</dbReference>
<dbReference type="GO" id="GO:0000287">
    <property type="term" value="F:magnesium ion binding"/>
    <property type="evidence" value="ECO:0007669"/>
    <property type="project" value="TreeGrafter"/>
</dbReference>
<dbReference type="GO" id="GO:0015095">
    <property type="term" value="F:magnesium ion transmembrane transporter activity"/>
    <property type="evidence" value="ECO:0007669"/>
    <property type="project" value="TreeGrafter"/>
</dbReference>
<dbReference type="GO" id="GO:0005385">
    <property type="term" value="F:zinc ion transmembrane transporter activity"/>
    <property type="evidence" value="ECO:0007669"/>
    <property type="project" value="UniProtKB-UniRule"/>
</dbReference>
<dbReference type="CDD" id="cd12833">
    <property type="entry name" value="ZntB-like_1"/>
    <property type="match status" value="1"/>
</dbReference>
<dbReference type="Gene3D" id="3.30.460.20">
    <property type="entry name" value="CorA soluble domain-like"/>
    <property type="match status" value="1"/>
</dbReference>
<dbReference type="Gene3D" id="1.20.58.340">
    <property type="entry name" value="Magnesium transport protein CorA, transmembrane region"/>
    <property type="match status" value="2"/>
</dbReference>
<dbReference type="HAMAP" id="MF_01565">
    <property type="entry name" value="ZntB"/>
    <property type="match status" value="1"/>
</dbReference>
<dbReference type="InterPro" id="IPR045861">
    <property type="entry name" value="CorA_cytoplasmic_dom"/>
</dbReference>
<dbReference type="InterPro" id="IPR045863">
    <property type="entry name" value="CorA_TM1_TM2"/>
</dbReference>
<dbReference type="InterPro" id="IPR002523">
    <property type="entry name" value="MgTranspt_CorA/ZnTranspt_ZntB"/>
</dbReference>
<dbReference type="InterPro" id="IPR023714">
    <property type="entry name" value="Zn_transp_ZntB"/>
</dbReference>
<dbReference type="NCBIfam" id="NF007092">
    <property type="entry name" value="PRK09546.1"/>
    <property type="match status" value="1"/>
</dbReference>
<dbReference type="PANTHER" id="PTHR46494">
    <property type="entry name" value="CORA FAMILY METAL ION TRANSPORTER (EUROFUNG)"/>
    <property type="match status" value="1"/>
</dbReference>
<dbReference type="PANTHER" id="PTHR46494:SF3">
    <property type="entry name" value="ZINC TRANSPORT PROTEIN ZNTB"/>
    <property type="match status" value="1"/>
</dbReference>
<dbReference type="Pfam" id="PF01544">
    <property type="entry name" value="CorA"/>
    <property type="match status" value="1"/>
</dbReference>
<dbReference type="SUPFAM" id="SSF143865">
    <property type="entry name" value="CorA soluble domain-like"/>
    <property type="match status" value="1"/>
</dbReference>
<dbReference type="SUPFAM" id="SSF144083">
    <property type="entry name" value="Magnesium transport protein CorA, transmembrane region"/>
    <property type="match status" value="1"/>
</dbReference>
<proteinExistence type="inferred from homology"/>
<accession>A6T884</accession>
<evidence type="ECO:0000255" key="1">
    <source>
        <dbReference type="HAMAP-Rule" id="MF_01565"/>
    </source>
</evidence>
<sequence>MDAIKGSELQIPDAIFAWVLDGQGGVKPLADDDIIDKDKPCWLHLNYTHSDSADWLAATPLLPNNVRDALAGESTRPRVTRIGDGALITLRCINGSTDERPDQLVAMRLYMDERLIVSTRQRKVLALDDVLGDLKEGNGPTDGGSWLVEVCDALTDHASEFIEQLHDRIIDLEDDLLDQQVPPRGFLALLRKQLIVMRRYMAPQRDVYARLASERLPWMSDDQRRRMQDIAERLGRGLDEIDSCIARTAIMSDEIAQIMQESLARRTYTMSLMAMVFLPSTFLTGLFGVNLGGIPGNSWHLGFSLFCLMLVVVIGGVAWWLHRSKWL</sequence>
<organism>
    <name type="scientific">Klebsiella pneumoniae subsp. pneumoniae (strain ATCC 700721 / MGH 78578)</name>
    <dbReference type="NCBI Taxonomy" id="272620"/>
    <lineage>
        <taxon>Bacteria</taxon>
        <taxon>Pseudomonadati</taxon>
        <taxon>Pseudomonadota</taxon>
        <taxon>Gammaproteobacteria</taxon>
        <taxon>Enterobacterales</taxon>
        <taxon>Enterobacteriaceae</taxon>
        <taxon>Klebsiella/Raoultella group</taxon>
        <taxon>Klebsiella</taxon>
        <taxon>Klebsiella pneumoniae complex</taxon>
    </lineage>
</organism>
<protein>
    <recommendedName>
        <fullName evidence="1">Zinc transport protein ZntB</fullName>
    </recommendedName>
</protein>
<comment type="function">
    <text evidence="1">Zinc transporter. Acts as a Zn(2+):proton symporter, which likely mediates zinc ion uptake.</text>
</comment>
<comment type="catalytic activity">
    <reaction evidence="1">
        <text>Zn(2+)(out) + H(+)(out) = Zn(2+)(in) + H(+)(in)</text>
        <dbReference type="Rhea" id="RHEA:71195"/>
        <dbReference type="ChEBI" id="CHEBI:15378"/>
        <dbReference type="ChEBI" id="CHEBI:29105"/>
    </reaction>
    <physiologicalReaction direction="left-to-right" evidence="1">
        <dbReference type="Rhea" id="RHEA:71196"/>
    </physiologicalReaction>
</comment>
<comment type="subcellular location">
    <subcellularLocation>
        <location evidence="1">Cell inner membrane</location>
        <topology evidence="1">Multi-pass membrane protein</topology>
    </subcellularLocation>
</comment>
<comment type="similarity">
    <text evidence="1">Belongs to the CorA metal ion transporter (MIT) (TC 1.A.35) family.</text>
</comment>
<feature type="chain" id="PRO_1000069075" description="Zinc transport protein ZntB">
    <location>
        <begin position="1"/>
        <end position="327"/>
    </location>
</feature>
<feature type="topological domain" description="Cytoplasmic" evidence="1">
    <location>
        <begin position="1"/>
        <end position="273"/>
    </location>
</feature>
<feature type="transmembrane region" description="Helical" evidence="1">
    <location>
        <begin position="274"/>
        <end position="294"/>
    </location>
</feature>
<feature type="topological domain" description="Periplasmic" evidence="1">
    <location>
        <begin position="295"/>
        <end position="300"/>
    </location>
</feature>
<feature type="transmembrane region" description="Helical" evidence="1">
    <location>
        <begin position="301"/>
        <end position="321"/>
    </location>
</feature>
<feature type="topological domain" description="Cytoplasmic" evidence="1">
    <location>
        <begin position="322"/>
        <end position="327"/>
    </location>
</feature>